<sequence length="354" mass="42732">MVLNANHLQTKKTIKETLLAPRFYTTDFDEISRYDISSNFEEIEAIVNEFRSDYNKKHFIRDEEFDRHWSQIDAQTKQMFVEFLERSCTAEFSGFLLYKELARKLKEKMPVLAEGFLLMSRDEARHAGFLNKAMADFNLTLDLGFMTKNRRYTFFKPKFIFYATYLSEKIGYWRYITIYRHLEKHPEHRIYPIFKFFESWCQDENRHGDFFAAIVKSQPYLLEGFISKLWCRFFLLAVFATMYLNDCQRGEFYKSIGLDPRQFDIYVIQKTNESAAKLFPTVLDLDNPRFFECLDKCACYNKLLLEIDDREQPFFNQVLNVFYKFYLYFLLVLNFIMLYFLRTVNCNSFTRMVK</sequence>
<proteinExistence type="inferred from homology"/>
<accession>Q9TLR8</accession>
<protein>
    <recommendedName>
        <fullName evidence="1">Magnesium-protoporphyrin IX monomethyl ester [oxidative] cyclase</fullName>
        <shortName evidence="1">Mg-protoporphyrin IX monomethyl ester oxidative cyclase</shortName>
        <ecNumber evidence="1">1.14.13.81</ecNumber>
    </recommendedName>
</protein>
<organism>
    <name type="scientific">Cyanidium caldarium</name>
    <name type="common">Red alga</name>
    <dbReference type="NCBI Taxonomy" id="2771"/>
    <lineage>
        <taxon>Eukaryota</taxon>
        <taxon>Rhodophyta</taxon>
        <taxon>Bangiophyceae</taxon>
        <taxon>Cyanidiales</taxon>
        <taxon>Cyanidiaceae</taxon>
        <taxon>Cyanidium</taxon>
    </lineage>
</organism>
<geneLocation type="chloroplast"/>
<reference key="1">
    <citation type="journal article" date="2000" name="J. Mol. Evol.">
        <title>The structure and gene repertoire of an ancient red algal plastid genome.</title>
        <authorList>
            <person name="Gloeckner G."/>
            <person name="Rosenthal A."/>
            <person name="Valentin K.-U."/>
        </authorList>
    </citation>
    <scope>NUCLEOTIDE SEQUENCE [LARGE SCALE GENOMIC DNA]</scope>
    <source>
        <strain>RK-1</strain>
    </source>
</reference>
<comment type="function">
    <text evidence="1">Catalyzes the formation of the isocyclic ring in chlorophyll biosynthesis. Mediates the cyclase reaction, which results in the formation of divinylprotochlorophyllide (Pchlide) characteristic of all chlorophylls from magnesium-protoporphyrin IX 13-monomethyl ester (MgPMME).</text>
</comment>
<comment type="catalytic activity">
    <reaction evidence="1">
        <text>Mg-protoporphyrin IX 13-monomethyl ester + 3 NADPH + 3 O2 + 2 H(+) = 3,8-divinyl protochlorophyllide a + 3 NADP(+) + 5 H2O</text>
        <dbReference type="Rhea" id="RHEA:33235"/>
        <dbReference type="ChEBI" id="CHEBI:15377"/>
        <dbReference type="ChEBI" id="CHEBI:15378"/>
        <dbReference type="ChEBI" id="CHEBI:15379"/>
        <dbReference type="ChEBI" id="CHEBI:57783"/>
        <dbReference type="ChEBI" id="CHEBI:58349"/>
        <dbReference type="ChEBI" id="CHEBI:58632"/>
        <dbReference type="ChEBI" id="CHEBI:60491"/>
        <dbReference type="EC" id="1.14.13.81"/>
    </reaction>
</comment>
<comment type="cofactor">
    <cofactor evidence="1">
        <name>Fe cation</name>
        <dbReference type="ChEBI" id="CHEBI:24875"/>
    </cofactor>
</comment>
<comment type="pathway">
    <text evidence="1">Porphyrin-containing compound metabolism; chlorophyll biosynthesis (light-independent).</text>
</comment>
<comment type="subcellular location">
    <subcellularLocation>
        <location>Plastid</location>
        <location>Chloroplast</location>
    </subcellularLocation>
</comment>
<comment type="similarity">
    <text evidence="1">Belongs to the AcsF family.</text>
</comment>
<dbReference type="EC" id="1.14.13.81" evidence="1"/>
<dbReference type="EMBL" id="AF022186">
    <property type="protein sequence ID" value="AAF12893.1"/>
    <property type="molecule type" value="Genomic_DNA"/>
</dbReference>
<dbReference type="RefSeq" id="NP_045201.1">
    <property type="nucleotide sequence ID" value="NC_001840.1"/>
</dbReference>
<dbReference type="SMR" id="Q9TLR8"/>
<dbReference type="GeneID" id="800267"/>
<dbReference type="UniPathway" id="UPA00670"/>
<dbReference type="GO" id="GO:0009507">
    <property type="term" value="C:chloroplast"/>
    <property type="evidence" value="ECO:0007669"/>
    <property type="project" value="UniProtKB-SubCell"/>
</dbReference>
<dbReference type="GO" id="GO:0005506">
    <property type="term" value="F:iron ion binding"/>
    <property type="evidence" value="ECO:0007669"/>
    <property type="project" value="UniProtKB-UniRule"/>
</dbReference>
<dbReference type="GO" id="GO:0048529">
    <property type="term" value="F:magnesium-protoporphyrin IX monomethyl ester (oxidative) cyclase activity"/>
    <property type="evidence" value="ECO:0007669"/>
    <property type="project" value="UniProtKB-UniRule"/>
</dbReference>
<dbReference type="GO" id="GO:0036068">
    <property type="term" value="P:light-independent chlorophyll biosynthetic process"/>
    <property type="evidence" value="ECO:0007669"/>
    <property type="project" value="UniProtKB-UniRule"/>
</dbReference>
<dbReference type="GO" id="GO:0015979">
    <property type="term" value="P:photosynthesis"/>
    <property type="evidence" value="ECO:0007669"/>
    <property type="project" value="UniProtKB-UniRule"/>
</dbReference>
<dbReference type="CDD" id="cd01047">
    <property type="entry name" value="ACSF"/>
    <property type="match status" value="1"/>
</dbReference>
<dbReference type="HAMAP" id="MF_01840">
    <property type="entry name" value="AcsF"/>
    <property type="match status" value="1"/>
</dbReference>
<dbReference type="InterPro" id="IPR008434">
    <property type="entry name" value="AcsF"/>
</dbReference>
<dbReference type="InterPro" id="IPR009078">
    <property type="entry name" value="Ferritin-like_SF"/>
</dbReference>
<dbReference type="InterPro" id="IPR003251">
    <property type="entry name" value="Rr_diiron-bd_dom"/>
</dbReference>
<dbReference type="NCBIfam" id="TIGR02029">
    <property type="entry name" value="AcsF"/>
    <property type="match status" value="1"/>
</dbReference>
<dbReference type="NCBIfam" id="NF010172">
    <property type="entry name" value="PRK13654.1"/>
    <property type="match status" value="1"/>
</dbReference>
<dbReference type="PANTHER" id="PTHR31053">
    <property type="entry name" value="MAGNESIUM-PROTOPORPHYRIN IX MONOMETHYL ESTER [OXIDATIVE] CYCLASE, CHLOROPLASTIC"/>
    <property type="match status" value="1"/>
</dbReference>
<dbReference type="PANTHER" id="PTHR31053:SF2">
    <property type="entry name" value="MAGNESIUM-PROTOPORPHYRIN IX MONOMETHYL ESTER [OXIDATIVE] CYCLASE, CHLOROPLASTIC"/>
    <property type="match status" value="1"/>
</dbReference>
<dbReference type="Pfam" id="PF02915">
    <property type="entry name" value="Rubrerythrin"/>
    <property type="match status" value="1"/>
</dbReference>
<dbReference type="SUPFAM" id="SSF47240">
    <property type="entry name" value="Ferritin-like"/>
    <property type="match status" value="1"/>
</dbReference>
<gene>
    <name evidence="1" type="primary">acsF</name>
    <name type="synonym">ycf59</name>
</gene>
<feature type="chain" id="PRO_0000217541" description="Magnesium-protoporphyrin IX monomethyl ester [oxidative] cyclase">
    <location>
        <begin position="1"/>
        <end position="354"/>
    </location>
</feature>
<keyword id="KW-0149">Chlorophyll biosynthesis</keyword>
<keyword id="KW-0150">Chloroplast</keyword>
<keyword id="KW-0408">Iron</keyword>
<keyword id="KW-0479">Metal-binding</keyword>
<keyword id="KW-0521">NADP</keyword>
<keyword id="KW-0560">Oxidoreductase</keyword>
<keyword id="KW-0602">Photosynthesis</keyword>
<keyword id="KW-0934">Plastid</keyword>
<evidence type="ECO:0000255" key="1">
    <source>
        <dbReference type="HAMAP-Rule" id="MF_01840"/>
    </source>
</evidence>
<name>ACSF_CYACA</name>